<comment type="function">
    <text evidence="2">Involved in base excision repair of DNA damaged by oxidation or by mutagenic agents. Acts as a DNA glycosylase that recognizes and removes damaged bases. Has a preference for oxidized purines, such as 7,8-dihydro-8-oxoguanine (8-oxoG). Has AP (apurinic/apyrimidinic) lyase activity and introduces nicks in the DNA strand. Cleaves the DNA backbone by beta-delta elimination to generate a single-strand break at the site of the removed base with both 3'- and 5'-phosphates.</text>
</comment>
<comment type="catalytic activity">
    <reaction evidence="2">
        <text>Hydrolysis of DNA containing ring-opened 7-methylguanine residues, releasing 2,6-diamino-4-hydroxy-5-(N-methyl)formamidopyrimidine.</text>
        <dbReference type="EC" id="3.2.2.23"/>
    </reaction>
</comment>
<comment type="catalytic activity">
    <reaction evidence="2">
        <text>2'-deoxyribonucleotide-(2'-deoxyribose 5'-phosphate)-2'-deoxyribonucleotide-DNA = a 3'-end 2'-deoxyribonucleotide-(2,3-dehydro-2,3-deoxyribose 5'-phosphate)-DNA + a 5'-end 5'-phospho-2'-deoxyribonucleoside-DNA + H(+)</text>
        <dbReference type="Rhea" id="RHEA:66592"/>
        <dbReference type="Rhea" id="RHEA-COMP:13180"/>
        <dbReference type="Rhea" id="RHEA-COMP:16897"/>
        <dbReference type="Rhea" id="RHEA-COMP:17067"/>
        <dbReference type="ChEBI" id="CHEBI:15378"/>
        <dbReference type="ChEBI" id="CHEBI:136412"/>
        <dbReference type="ChEBI" id="CHEBI:157695"/>
        <dbReference type="ChEBI" id="CHEBI:167181"/>
        <dbReference type="EC" id="4.2.99.18"/>
    </reaction>
</comment>
<comment type="cofactor">
    <cofactor evidence="2">
        <name>Zn(2+)</name>
        <dbReference type="ChEBI" id="CHEBI:29105"/>
    </cofactor>
    <text evidence="2">Binds 1 zinc ion per subunit.</text>
</comment>
<comment type="subunit">
    <text evidence="2">Monomer.</text>
</comment>
<comment type="similarity">
    <text evidence="2">Belongs to the FPG family.</text>
</comment>
<reference key="1">
    <citation type="journal article" date="2004" name="Nat. Genet.">
        <title>Evidence in the Legionella pneumophila genome for exploitation of host cell functions and high genome plasticity.</title>
        <authorList>
            <person name="Cazalet C."/>
            <person name="Rusniok C."/>
            <person name="Brueggemann H."/>
            <person name="Zidane N."/>
            <person name="Magnier A."/>
            <person name="Ma L."/>
            <person name="Tichit M."/>
            <person name="Jarraud S."/>
            <person name="Bouchier C."/>
            <person name="Vandenesch F."/>
            <person name="Kunst F."/>
            <person name="Etienne J."/>
            <person name="Glaser P."/>
            <person name="Buchrieser C."/>
        </authorList>
    </citation>
    <scope>NUCLEOTIDE SEQUENCE [LARGE SCALE GENOMIC DNA]</scope>
    <source>
        <strain>Paris</strain>
    </source>
</reference>
<protein>
    <recommendedName>
        <fullName evidence="2">Formamidopyrimidine-DNA glycosylase</fullName>
        <shortName evidence="2">Fapy-DNA glycosylase</shortName>
        <ecNumber evidence="2">3.2.2.23</ecNumber>
    </recommendedName>
    <alternativeName>
        <fullName evidence="2">DNA-(apurinic or apyrimidinic site) lyase MutM</fullName>
        <shortName evidence="2">AP lyase MutM</shortName>
        <ecNumber evidence="2">4.2.99.18</ecNumber>
    </alternativeName>
</protein>
<sequence length="274" mass="30812">MPELPEVETTKQGIKPHLEGRIITTAQVRNRKLRLPVPLNLNELCEGKHITAITRRGKYILLHMDKGYILIHLGMSGHLRIVSQTANPQKHDHVDLHINNGLALRFCDPRRFGLFIYIDENPYQHPLLAHLGPEPLSDDFNSEYLLRKAANKSQSIKSFIMDSQIVVGIGNIYAAESLFLAKIHPNTSAKKITTEEFNSLTGHIKKILESAIEAGGTTLRDFYSSDGKPGYFRFALKVYGRKNLPCLVCENKIETVVIAGRHSAFCPHCQPIIT</sequence>
<accession>Q5X7I9</accession>
<feature type="initiator methionine" description="Removed" evidence="1">
    <location>
        <position position="1"/>
    </location>
</feature>
<feature type="chain" id="PRO_0000228444" description="Formamidopyrimidine-DNA glycosylase">
    <location>
        <begin position="2"/>
        <end position="274"/>
    </location>
</feature>
<feature type="zinc finger region" description="FPG-type" evidence="2">
    <location>
        <begin position="237"/>
        <end position="271"/>
    </location>
</feature>
<feature type="active site" description="Schiff-base intermediate with DNA" evidence="2">
    <location>
        <position position="2"/>
    </location>
</feature>
<feature type="active site" description="Proton donor" evidence="2">
    <location>
        <position position="3"/>
    </location>
</feature>
<feature type="active site" description="Proton donor; for beta-elimination activity" evidence="2">
    <location>
        <position position="58"/>
    </location>
</feature>
<feature type="active site" description="Proton donor; for delta-elimination activity" evidence="2">
    <location>
        <position position="261"/>
    </location>
</feature>
<feature type="binding site" evidence="2">
    <location>
        <position position="91"/>
    </location>
    <ligand>
        <name>DNA</name>
        <dbReference type="ChEBI" id="CHEBI:16991"/>
    </ligand>
</feature>
<feature type="binding site" evidence="2">
    <location>
        <position position="110"/>
    </location>
    <ligand>
        <name>DNA</name>
        <dbReference type="ChEBI" id="CHEBI:16991"/>
    </ligand>
</feature>
<feature type="binding site" evidence="2">
    <location>
        <position position="152"/>
    </location>
    <ligand>
        <name>DNA</name>
        <dbReference type="ChEBI" id="CHEBI:16991"/>
    </ligand>
</feature>
<dbReference type="EC" id="3.2.2.23" evidence="2"/>
<dbReference type="EC" id="4.2.99.18" evidence="2"/>
<dbReference type="EMBL" id="CR628336">
    <property type="protein sequence ID" value="CAH11764.1"/>
    <property type="molecule type" value="Genomic_DNA"/>
</dbReference>
<dbReference type="RefSeq" id="WP_011213177.1">
    <property type="nucleotide sequence ID" value="NC_006368.1"/>
</dbReference>
<dbReference type="SMR" id="Q5X7I9"/>
<dbReference type="KEGG" id="lpp:lpp0616"/>
<dbReference type="LegioList" id="lpp0616"/>
<dbReference type="HOGENOM" id="CLU_038423_1_1_6"/>
<dbReference type="GO" id="GO:0034039">
    <property type="term" value="F:8-oxo-7,8-dihydroguanine DNA N-glycosylase activity"/>
    <property type="evidence" value="ECO:0007669"/>
    <property type="project" value="TreeGrafter"/>
</dbReference>
<dbReference type="GO" id="GO:0140078">
    <property type="term" value="F:class I DNA-(apurinic or apyrimidinic site) endonuclease activity"/>
    <property type="evidence" value="ECO:0007669"/>
    <property type="project" value="UniProtKB-EC"/>
</dbReference>
<dbReference type="GO" id="GO:0003684">
    <property type="term" value="F:damaged DNA binding"/>
    <property type="evidence" value="ECO:0007669"/>
    <property type="project" value="InterPro"/>
</dbReference>
<dbReference type="GO" id="GO:0008270">
    <property type="term" value="F:zinc ion binding"/>
    <property type="evidence" value="ECO:0007669"/>
    <property type="project" value="UniProtKB-UniRule"/>
</dbReference>
<dbReference type="GO" id="GO:0006284">
    <property type="term" value="P:base-excision repair"/>
    <property type="evidence" value="ECO:0007669"/>
    <property type="project" value="InterPro"/>
</dbReference>
<dbReference type="CDD" id="cd08966">
    <property type="entry name" value="EcFpg-like_N"/>
    <property type="match status" value="1"/>
</dbReference>
<dbReference type="FunFam" id="1.10.8.50:FF:000003">
    <property type="entry name" value="Formamidopyrimidine-DNA glycosylase"/>
    <property type="match status" value="1"/>
</dbReference>
<dbReference type="FunFam" id="3.20.190.10:FF:000001">
    <property type="entry name" value="Formamidopyrimidine-DNA glycosylase"/>
    <property type="match status" value="1"/>
</dbReference>
<dbReference type="Gene3D" id="1.10.8.50">
    <property type="match status" value="1"/>
</dbReference>
<dbReference type="Gene3D" id="3.20.190.10">
    <property type="entry name" value="MutM-like, N-terminal"/>
    <property type="match status" value="1"/>
</dbReference>
<dbReference type="HAMAP" id="MF_00103">
    <property type="entry name" value="Fapy_DNA_glycosyl"/>
    <property type="match status" value="1"/>
</dbReference>
<dbReference type="InterPro" id="IPR015886">
    <property type="entry name" value="DNA_glyclase/AP_lyase_DNA-bd"/>
</dbReference>
<dbReference type="InterPro" id="IPR020629">
    <property type="entry name" value="Formamido-pyr_DNA_Glyclase"/>
</dbReference>
<dbReference type="InterPro" id="IPR012319">
    <property type="entry name" value="FPG_cat"/>
</dbReference>
<dbReference type="InterPro" id="IPR035937">
    <property type="entry name" value="MutM-like_N-ter"/>
</dbReference>
<dbReference type="InterPro" id="IPR010979">
    <property type="entry name" value="Ribosomal_uS13-like_H2TH"/>
</dbReference>
<dbReference type="InterPro" id="IPR000214">
    <property type="entry name" value="Znf_DNA_glyclase/AP_lyase"/>
</dbReference>
<dbReference type="InterPro" id="IPR010663">
    <property type="entry name" value="Znf_FPG/IleRS"/>
</dbReference>
<dbReference type="NCBIfam" id="TIGR00577">
    <property type="entry name" value="fpg"/>
    <property type="match status" value="1"/>
</dbReference>
<dbReference type="NCBIfam" id="NF002211">
    <property type="entry name" value="PRK01103.1"/>
    <property type="match status" value="1"/>
</dbReference>
<dbReference type="PANTHER" id="PTHR22993">
    <property type="entry name" value="FORMAMIDOPYRIMIDINE-DNA GLYCOSYLASE"/>
    <property type="match status" value="1"/>
</dbReference>
<dbReference type="PANTHER" id="PTHR22993:SF9">
    <property type="entry name" value="FORMAMIDOPYRIMIDINE-DNA GLYCOSYLASE"/>
    <property type="match status" value="1"/>
</dbReference>
<dbReference type="Pfam" id="PF01149">
    <property type="entry name" value="Fapy_DNA_glyco"/>
    <property type="match status" value="1"/>
</dbReference>
<dbReference type="Pfam" id="PF06831">
    <property type="entry name" value="H2TH"/>
    <property type="match status" value="1"/>
</dbReference>
<dbReference type="Pfam" id="PF06827">
    <property type="entry name" value="zf-FPG_IleRS"/>
    <property type="match status" value="1"/>
</dbReference>
<dbReference type="SMART" id="SM00898">
    <property type="entry name" value="Fapy_DNA_glyco"/>
    <property type="match status" value="1"/>
</dbReference>
<dbReference type="SMART" id="SM01232">
    <property type="entry name" value="H2TH"/>
    <property type="match status" value="1"/>
</dbReference>
<dbReference type="SUPFAM" id="SSF57716">
    <property type="entry name" value="Glucocorticoid receptor-like (DNA-binding domain)"/>
    <property type="match status" value="1"/>
</dbReference>
<dbReference type="SUPFAM" id="SSF81624">
    <property type="entry name" value="N-terminal domain of MutM-like DNA repair proteins"/>
    <property type="match status" value="1"/>
</dbReference>
<dbReference type="SUPFAM" id="SSF46946">
    <property type="entry name" value="S13-like H2TH domain"/>
    <property type="match status" value="1"/>
</dbReference>
<dbReference type="PROSITE" id="PS51068">
    <property type="entry name" value="FPG_CAT"/>
    <property type="match status" value="1"/>
</dbReference>
<dbReference type="PROSITE" id="PS51066">
    <property type="entry name" value="ZF_FPG_2"/>
    <property type="match status" value="1"/>
</dbReference>
<proteinExistence type="inferred from homology"/>
<name>FPG_LEGPA</name>
<keyword id="KW-0227">DNA damage</keyword>
<keyword id="KW-0234">DNA repair</keyword>
<keyword id="KW-0238">DNA-binding</keyword>
<keyword id="KW-0326">Glycosidase</keyword>
<keyword id="KW-0378">Hydrolase</keyword>
<keyword id="KW-0456">Lyase</keyword>
<keyword id="KW-0479">Metal-binding</keyword>
<keyword id="KW-0511">Multifunctional enzyme</keyword>
<keyword id="KW-0862">Zinc</keyword>
<keyword id="KW-0863">Zinc-finger</keyword>
<gene>
    <name evidence="2" type="primary">mutM</name>
    <name evidence="2" type="synonym">fpg</name>
    <name type="ordered locus">lpp0616</name>
</gene>
<evidence type="ECO:0000250" key="1"/>
<evidence type="ECO:0000255" key="2">
    <source>
        <dbReference type="HAMAP-Rule" id="MF_00103"/>
    </source>
</evidence>
<organism>
    <name type="scientific">Legionella pneumophila (strain Paris)</name>
    <dbReference type="NCBI Taxonomy" id="297246"/>
    <lineage>
        <taxon>Bacteria</taxon>
        <taxon>Pseudomonadati</taxon>
        <taxon>Pseudomonadota</taxon>
        <taxon>Gammaproteobacteria</taxon>
        <taxon>Legionellales</taxon>
        <taxon>Legionellaceae</taxon>
        <taxon>Legionella</taxon>
    </lineage>
</organism>